<reference key="1">
    <citation type="submission" date="2006-05" db="EMBL/GenBank/DDBJ databases">
        <title>Complete sequence of chromosome 1 of Burkholderia cenocepacia AU 1054.</title>
        <authorList>
            <consortium name="US DOE Joint Genome Institute"/>
            <person name="Copeland A."/>
            <person name="Lucas S."/>
            <person name="Lapidus A."/>
            <person name="Barry K."/>
            <person name="Detter J.C."/>
            <person name="Glavina del Rio T."/>
            <person name="Hammon N."/>
            <person name="Israni S."/>
            <person name="Dalin E."/>
            <person name="Tice H."/>
            <person name="Pitluck S."/>
            <person name="Chain P."/>
            <person name="Malfatti S."/>
            <person name="Shin M."/>
            <person name="Vergez L."/>
            <person name="Schmutz J."/>
            <person name="Larimer F."/>
            <person name="Land M."/>
            <person name="Hauser L."/>
            <person name="Kyrpides N."/>
            <person name="Lykidis A."/>
            <person name="LiPuma J.J."/>
            <person name="Konstantinidis K."/>
            <person name="Tiedje J.M."/>
            <person name="Richardson P."/>
        </authorList>
    </citation>
    <scope>NUCLEOTIDE SEQUENCE [LARGE SCALE GENOMIC DNA]</scope>
    <source>
        <strain>AU 1054</strain>
    </source>
</reference>
<accession>Q1BUZ9</accession>
<gene>
    <name evidence="1" type="primary">ilvC</name>
    <name type="ordered locus">Bcen_1652</name>
</gene>
<protein>
    <recommendedName>
        <fullName evidence="1">Ketol-acid reductoisomerase (NADP(+))</fullName>
        <shortName evidence="1">KARI</shortName>
        <ecNumber evidence="1">1.1.1.86</ecNumber>
    </recommendedName>
    <alternativeName>
        <fullName evidence="1">Acetohydroxy-acid isomeroreductase</fullName>
        <shortName evidence="1">AHIR</shortName>
    </alternativeName>
    <alternativeName>
        <fullName evidence="1">Alpha-keto-beta-hydroxylacyl reductoisomerase</fullName>
    </alternativeName>
    <alternativeName>
        <fullName evidence="1">Ketol-acid reductoisomerase type 1</fullName>
    </alternativeName>
    <alternativeName>
        <fullName evidence="1">Ketol-acid reductoisomerase type I</fullName>
    </alternativeName>
</protein>
<name>ILVC_BURO1</name>
<comment type="function">
    <text evidence="1">Involved in the biosynthesis of branched-chain amino acids (BCAA). Catalyzes an alkyl-migration followed by a ketol-acid reduction of (S)-2-acetolactate (S2AL) to yield (R)-2,3-dihydroxy-isovalerate. In the isomerase reaction, S2AL is rearranged via a Mg-dependent methyl migration to produce 3-hydroxy-3-methyl-2-ketobutyrate (HMKB). In the reductase reaction, this 2-ketoacid undergoes a metal-dependent reduction by NADPH to yield (R)-2,3-dihydroxy-isovalerate.</text>
</comment>
<comment type="catalytic activity">
    <reaction evidence="1">
        <text>(2R)-2,3-dihydroxy-3-methylbutanoate + NADP(+) = (2S)-2-acetolactate + NADPH + H(+)</text>
        <dbReference type="Rhea" id="RHEA:22068"/>
        <dbReference type="ChEBI" id="CHEBI:15378"/>
        <dbReference type="ChEBI" id="CHEBI:49072"/>
        <dbReference type="ChEBI" id="CHEBI:57783"/>
        <dbReference type="ChEBI" id="CHEBI:58349"/>
        <dbReference type="ChEBI" id="CHEBI:58476"/>
        <dbReference type="EC" id="1.1.1.86"/>
    </reaction>
</comment>
<comment type="catalytic activity">
    <reaction evidence="1">
        <text>(2R,3R)-2,3-dihydroxy-3-methylpentanoate + NADP(+) = (S)-2-ethyl-2-hydroxy-3-oxobutanoate + NADPH + H(+)</text>
        <dbReference type="Rhea" id="RHEA:13493"/>
        <dbReference type="ChEBI" id="CHEBI:15378"/>
        <dbReference type="ChEBI" id="CHEBI:49256"/>
        <dbReference type="ChEBI" id="CHEBI:49258"/>
        <dbReference type="ChEBI" id="CHEBI:57783"/>
        <dbReference type="ChEBI" id="CHEBI:58349"/>
        <dbReference type="EC" id="1.1.1.86"/>
    </reaction>
</comment>
<comment type="cofactor">
    <cofactor evidence="1">
        <name>Mg(2+)</name>
        <dbReference type="ChEBI" id="CHEBI:18420"/>
    </cofactor>
    <text evidence="1">Binds 2 magnesium ions per subunit.</text>
</comment>
<comment type="pathway">
    <text evidence="1">Amino-acid biosynthesis; L-isoleucine biosynthesis; L-isoleucine from 2-oxobutanoate: step 2/4.</text>
</comment>
<comment type="pathway">
    <text evidence="1">Amino-acid biosynthesis; L-valine biosynthesis; L-valine from pyruvate: step 2/4.</text>
</comment>
<comment type="similarity">
    <text evidence="1">Belongs to the ketol-acid reductoisomerase family.</text>
</comment>
<organism>
    <name type="scientific">Burkholderia orbicola (strain AU 1054)</name>
    <dbReference type="NCBI Taxonomy" id="331271"/>
    <lineage>
        <taxon>Bacteria</taxon>
        <taxon>Pseudomonadati</taxon>
        <taxon>Pseudomonadota</taxon>
        <taxon>Betaproteobacteria</taxon>
        <taxon>Burkholderiales</taxon>
        <taxon>Burkholderiaceae</taxon>
        <taxon>Burkholderia</taxon>
        <taxon>Burkholderia cepacia complex</taxon>
        <taxon>Burkholderia orbicola</taxon>
    </lineage>
</organism>
<keyword id="KW-0028">Amino-acid biosynthesis</keyword>
<keyword id="KW-0100">Branched-chain amino acid biosynthesis</keyword>
<keyword id="KW-0460">Magnesium</keyword>
<keyword id="KW-0479">Metal-binding</keyword>
<keyword id="KW-0521">NADP</keyword>
<keyword id="KW-0560">Oxidoreductase</keyword>
<feature type="chain" id="PRO_0000252752" description="Ketol-acid reductoisomerase (NADP(+))">
    <location>
        <begin position="1"/>
        <end position="338"/>
    </location>
</feature>
<feature type="domain" description="KARI N-terminal Rossmann" evidence="2">
    <location>
        <begin position="1"/>
        <end position="181"/>
    </location>
</feature>
<feature type="domain" description="KARI C-terminal knotted" evidence="3">
    <location>
        <begin position="182"/>
        <end position="327"/>
    </location>
</feature>
<feature type="active site" evidence="1">
    <location>
        <position position="107"/>
    </location>
</feature>
<feature type="binding site" evidence="1">
    <location>
        <begin position="24"/>
        <end position="27"/>
    </location>
    <ligand>
        <name>NADP(+)</name>
        <dbReference type="ChEBI" id="CHEBI:58349"/>
    </ligand>
</feature>
<feature type="binding site" evidence="1">
    <location>
        <position position="47"/>
    </location>
    <ligand>
        <name>NADP(+)</name>
        <dbReference type="ChEBI" id="CHEBI:58349"/>
    </ligand>
</feature>
<feature type="binding site" evidence="1">
    <location>
        <position position="52"/>
    </location>
    <ligand>
        <name>NADP(+)</name>
        <dbReference type="ChEBI" id="CHEBI:58349"/>
    </ligand>
</feature>
<feature type="binding site" evidence="1">
    <location>
        <position position="133"/>
    </location>
    <ligand>
        <name>NADP(+)</name>
        <dbReference type="ChEBI" id="CHEBI:58349"/>
    </ligand>
</feature>
<feature type="binding site" evidence="1">
    <location>
        <position position="190"/>
    </location>
    <ligand>
        <name>Mg(2+)</name>
        <dbReference type="ChEBI" id="CHEBI:18420"/>
        <label>1</label>
    </ligand>
</feature>
<feature type="binding site" evidence="1">
    <location>
        <position position="190"/>
    </location>
    <ligand>
        <name>Mg(2+)</name>
        <dbReference type="ChEBI" id="CHEBI:18420"/>
        <label>2</label>
    </ligand>
</feature>
<feature type="binding site" evidence="1">
    <location>
        <position position="194"/>
    </location>
    <ligand>
        <name>Mg(2+)</name>
        <dbReference type="ChEBI" id="CHEBI:18420"/>
        <label>1</label>
    </ligand>
</feature>
<feature type="binding site" evidence="1">
    <location>
        <position position="226"/>
    </location>
    <ligand>
        <name>Mg(2+)</name>
        <dbReference type="ChEBI" id="CHEBI:18420"/>
        <label>2</label>
    </ligand>
</feature>
<feature type="binding site" evidence="1">
    <location>
        <position position="230"/>
    </location>
    <ligand>
        <name>Mg(2+)</name>
        <dbReference type="ChEBI" id="CHEBI:18420"/>
        <label>2</label>
    </ligand>
</feature>
<feature type="binding site" evidence="1">
    <location>
        <position position="251"/>
    </location>
    <ligand>
        <name>substrate</name>
    </ligand>
</feature>
<dbReference type="EC" id="1.1.1.86" evidence="1"/>
<dbReference type="EMBL" id="CP000378">
    <property type="protein sequence ID" value="ABF76556.1"/>
    <property type="molecule type" value="Genomic_DNA"/>
</dbReference>
<dbReference type="SMR" id="Q1BUZ9"/>
<dbReference type="HOGENOM" id="CLU_033821_0_1_4"/>
<dbReference type="UniPathway" id="UPA00047">
    <property type="reaction ID" value="UER00056"/>
</dbReference>
<dbReference type="UniPathway" id="UPA00049">
    <property type="reaction ID" value="UER00060"/>
</dbReference>
<dbReference type="GO" id="GO:0005829">
    <property type="term" value="C:cytosol"/>
    <property type="evidence" value="ECO:0007669"/>
    <property type="project" value="TreeGrafter"/>
</dbReference>
<dbReference type="GO" id="GO:0004455">
    <property type="term" value="F:ketol-acid reductoisomerase activity"/>
    <property type="evidence" value="ECO:0007669"/>
    <property type="project" value="UniProtKB-UniRule"/>
</dbReference>
<dbReference type="GO" id="GO:0000287">
    <property type="term" value="F:magnesium ion binding"/>
    <property type="evidence" value="ECO:0007669"/>
    <property type="project" value="UniProtKB-UniRule"/>
</dbReference>
<dbReference type="GO" id="GO:0050661">
    <property type="term" value="F:NADP binding"/>
    <property type="evidence" value="ECO:0007669"/>
    <property type="project" value="InterPro"/>
</dbReference>
<dbReference type="GO" id="GO:0009097">
    <property type="term" value="P:isoleucine biosynthetic process"/>
    <property type="evidence" value="ECO:0007669"/>
    <property type="project" value="UniProtKB-UniRule"/>
</dbReference>
<dbReference type="GO" id="GO:0009099">
    <property type="term" value="P:L-valine biosynthetic process"/>
    <property type="evidence" value="ECO:0007669"/>
    <property type="project" value="UniProtKB-UniRule"/>
</dbReference>
<dbReference type="FunFam" id="3.40.50.720:FF:000023">
    <property type="entry name" value="Ketol-acid reductoisomerase (NADP(+))"/>
    <property type="match status" value="1"/>
</dbReference>
<dbReference type="Gene3D" id="6.10.240.10">
    <property type="match status" value="1"/>
</dbReference>
<dbReference type="Gene3D" id="3.40.50.720">
    <property type="entry name" value="NAD(P)-binding Rossmann-like Domain"/>
    <property type="match status" value="1"/>
</dbReference>
<dbReference type="HAMAP" id="MF_00435">
    <property type="entry name" value="IlvC"/>
    <property type="match status" value="1"/>
</dbReference>
<dbReference type="InterPro" id="IPR008927">
    <property type="entry name" value="6-PGluconate_DH-like_C_sf"/>
</dbReference>
<dbReference type="InterPro" id="IPR013023">
    <property type="entry name" value="KARI"/>
</dbReference>
<dbReference type="InterPro" id="IPR000506">
    <property type="entry name" value="KARI_C"/>
</dbReference>
<dbReference type="InterPro" id="IPR013116">
    <property type="entry name" value="KARI_N"/>
</dbReference>
<dbReference type="InterPro" id="IPR014359">
    <property type="entry name" value="KARI_prok"/>
</dbReference>
<dbReference type="InterPro" id="IPR036291">
    <property type="entry name" value="NAD(P)-bd_dom_sf"/>
</dbReference>
<dbReference type="NCBIfam" id="TIGR00465">
    <property type="entry name" value="ilvC"/>
    <property type="match status" value="1"/>
</dbReference>
<dbReference type="NCBIfam" id="NF004017">
    <property type="entry name" value="PRK05479.1"/>
    <property type="match status" value="1"/>
</dbReference>
<dbReference type="NCBIfam" id="NF009940">
    <property type="entry name" value="PRK13403.1"/>
    <property type="match status" value="1"/>
</dbReference>
<dbReference type="PANTHER" id="PTHR21371">
    <property type="entry name" value="KETOL-ACID REDUCTOISOMERASE, MITOCHONDRIAL"/>
    <property type="match status" value="1"/>
</dbReference>
<dbReference type="PANTHER" id="PTHR21371:SF1">
    <property type="entry name" value="KETOL-ACID REDUCTOISOMERASE, MITOCHONDRIAL"/>
    <property type="match status" value="1"/>
</dbReference>
<dbReference type="Pfam" id="PF01450">
    <property type="entry name" value="KARI_C"/>
    <property type="match status" value="1"/>
</dbReference>
<dbReference type="Pfam" id="PF07991">
    <property type="entry name" value="KARI_N"/>
    <property type="match status" value="1"/>
</dbReference>
<dbReference type="PIRSF" id="PIRSF000116">
    <property type="entry name" value="IlvC_gammaproteo"/>
    <property type="match status" value="1"/>
</dbReference>
<dbReference type="SUPFAM" id="SSF48179">
    <property type="entry name" value="6-phosphogluconate dehydrogenase C-terminal domain-like"/>
    <property type="match status" value="1"/>
</dbReference>
<dbReference type="SUPFAM" id="SSF51735">
    <property type="entry name" value="NAD(P)-binding Rossmann-fold domains"/>
    <property type="match status" value="1"/>
</dbReference>
<dbReference type="PROSITE" id="PS51851">
    <property type="entry name" value="KARI_C"/>
    <property type="match status" value="1"/>
</dbReference>
<dbReference type="PROSITE" id="PS51850">
    <property type="entry name" value="KARI_N"/>
    <property type="match status" value="1"/>
</dbReference>
<proteinExistence type="inferred from homology"/>
<evidence type="ECO:0000255" key="1">
    <source>
        <dbReference type="HAMAP-Rule" id="MF_00435"/>
    </source>
</evidence>
<evidence type="ECO:0000255" key="2">
    <source>
        <dbReference type="PROSITE-ProRule" id="PRU01197"/>
    </source>
</evidence>
<evidence type="ECO:0000255" key="3">
    <source>
        <dbReference type="PROSITE-ProRule" id="PRU01198"/>
    </source>
</evidence>
<sequence length="338" mass="36311">MNVFYDKDADLSLIKGKQVTIIGYGSQGHAHALNLKDSGVNVTVGLRKGGASWSKAENAGLSVKEVAEAVKGADVVMMLLPDEQIADVYAKEVHANIKQGAALAFAHGFNVHYGQVIPRADLDVIMIAPKAPGHTVRGTYSQGGGVPHLIAVAQNKSGAARDIALSYAAANGGGRAGIIETNFREETETDLFGEQAVLCGGTVELIKAGFETLVEAGYAPEMAYFECLHELKLIVDLIYEGGIANMNYSISNNAEYGEYVTGPRVVTEETKKAMKQCLTDIQTGEYAKSFILENKAGAPTLQSRRRLTAEHQIEQVGAKLRAMMPWIAKNKLVDQTKN</sequence>